<reference key="1">
    <citation type="journal article" date="2004" name="Proc. Natl. Acad. Sci. U.S.A.">
        <title>The diploid genome sequence of Candida albicans.</title>
        <authorList>
            <person name="Jones T."/>
            <person name="Federspiel N.A."/>
            <person name="Chibana H."/>
            <person name="Dungan J."/>
            <person name="Kalman S."/>
            <person name="Magee B.B."/>
            <person name="Newport G."/>
            <person name="Thorstenson Y.R."/>
            <person name="Agabian N."/>
            <person name="Magee P.T."/>
            <person name="Davis R.W."/>
            <person name="Scherer S."/>
        </authorList>
    </citation>
    <scope>NUCLEOTIDE SEQUENCE [LARGE SCALE GENOMIC DNA]</scope>
    <source>
        <strain>SC5314 / ATCC MYA-2876</strain>
    </source>
</reference>
<reference key="2">
    <citation type="journal article" date="2007" name="Genome Biol.">
        <title>Assembly of the Candida albicans genome into sixteen supercontigs aligned on the eight chromosomes.</title>
        <authorList>
            <person name="van het Hoog M."/>
            <person name="Rast T.J."/>
            <person name="Martchenko M."/>
            <person name="Grindle S."/>
            <person name="Dignard D."/>
            <person name="Hogues H."/>
            <person name="Cuomo C."/>
            <person name="Berriman M."/>
            <person name="Scherer S."/>
            <person name="Magee B.B."/>
            <person name="Whiteway M."/>
            <person name="Chibana H."/>
            <person name="Nantel A."/>
            <person name="Magee P.T."/>
        </authorList>
    </citation>
    <scope>GENOME REANNOTATION</scope>
    <source>
        <strain>SC5314 / ATCC MYA-2876</strain>
    </source>
</reference>
<reference key="3">
    <citation type="journal article" date="2013" name="Genome Biol.">
        <title>Assembly of a phased diploid Candida albicans genome facilitates allele-specific measurements and provides a simple model for repeat and indel structure.</title>
        <authorList>
            <person name="Muzzey D."/>
            <person name="Schwartz K."/>
            <person name="Weissman J.S."/>
            <person name="Sherlock G."/>
        </authorList>
    </citation>
    <scope>NUCLEOTIDE SEQUENCE [LARGE SCALE GENOMIC DNA]</scope>
    <scope>GENOME REANNOTATION</scope>
    <source>
        <strain>SC5314 / ATCC MYA-2876</strain>
    </source>
</reference>
<reference key="4">
    <citation type="journal article" date="2003" name="Yeast">
        <title>Genome-wide identification of fungal GPI proteins.</title>
        <authorList>
            <person name="De Groot P.W."/>
            <person name="Hellingwerf K.J."/>
            <person name="Klis F.M."/>
        </authorList>
    </citation>
    <scope>PREDICTION OF GPI-ANCHOR</scope>
</reference>
<reference key="5">
    <citation type="journal article" date="2004" name="Eukaryot. Cell">
        <title>Proteomic analysis of Candida albicans cell walls reveals covalently bound carbohydrate-active enzymes and adhesins.</title>
        <authorList>
            <person name="de Groot P.W."/>
            <person name="de Boer A.D."/>
            <person name="Cunningham J."/>
            <person name="Dekker H.L."/>
            <person name="de Jong L."/>
            <person name="Hellingwerf K.J."/>
            <person name="de Koster C."/>
            <person name="Klis F.M."/>
        </authorList>
    </citation>
    <scope>IDENTIFICATION BY MASS SPECTROMETRY</scope>
    <scope>SUBCELLULAR LOCATION</scope>
</reference>
<reference key="6">
    <citation type="journal article" date="2007" name="Cell. Microbiol.">
        <title>In vivo transcript profiling of Candida albicans identifies a gene essential for interepithelial dissemination.</title>
        <authorList>
            <person name="Zakikhany K."/>
            <person name="Naglik J.R."/>
            <person name="Schmidt-Westhausen A."/>
            <person name="Holland G."/>
            <person name="Schaller M."/>
            <person name="Hube B."/>
        </authorList>
    </citation>
    <scope>INDUCTION</scope>
</reference>
<reference key="7">
    <citation type="journal article" date="2007" name="Fungal Genet. Biol.">
        <title>PGA4, a GAS homologue from Candida albicans, is up-regulated early in infection processes.</title>
        <authorList>
            <person name="Eckert S.E."/>
            <person name="Heinz W.J."/>
            <person name="Zakikhany K."/>
            <person name="Thewes S."/>
            <person name="Haynes K."/>
            <person name="Hube B."/>
            <person name="Muhlschlegel F.A."/>
        </authorList>
    </citation>
    <scope>INDUCTION</scope>
</reference>
<reference key="8">
    <citation type="journal article" date="2007" name="Yeast">
        <title>Global transcriptional profiling of Candida albicans cwt1 null mutant.</title>
        <authorList>
            <person name="Moreno I."/>
            <person name="Castillo L."/>
            <person name="Sentandreu R."/>
            <person name="Valentin E."/>
        </authorList>
    </citation>
    <scope>INDUCTION</scope>
</reference>
<reference key="9">
    <citation type="journal article" date="2008" name="Fungal Genet. Biol.">
        <title>Functional analysis of Candida albicans GPI-anchored proteins: roles in cell wall integrity and caspofungin sensitivity.</title>
        <authorList>
            <person name="Plaine A."/>
            <person name="Walker L."/>
            <person name="Da Costa G."/>
            <person name="Mora-Montes H.M."/>
            <person name="McKinnon A."/>
            <person name="Gow N.A."/>
            <person name="Gaillardin C."/>
            <person name="Munro C.A."/>
            <person name="Richard M.L."/>
        </authorList>
    </citation>
    <scope>FUNCTION</scope>
    <scope>DISRUPTION PHENOTYPE</scope>
</reference>
<reference key="10">
    <citation type="journal article" date="2008" name="Microbiology">
        <title>Hypoxic conditions and iron restriction affect the cell-wall proteome of Candida albicans grown under vagina-simulative conditions.</title>
        <authorList>
            <person name="Sosinska G.J."/>
            <person name="de Groot P.W."/>
            <person name="Teixeira de Mattos M.J."/>
            <person name="Dekker H.L."/>
            <person name="de Koster C.G."/>
            <person name="Hellingwerf K.J."/>
            <person name="Klis F.M."/>
        </authorList>
    </citation>
    <scope>IDENTIFICATION BY MASS SPECTROMETRY</scope>
    <scope>SUBCELLULAR LOCATION</scope>
</reference>
<reference key="11">
    <citation type="journal article" date="2008" name="Proteomics">
        <title>A study of the Candida albicans cell wall proteome.</title>
        <authorList>
            <person name="Castillo L."/>
            <person name="Calvo E."/>
            <person name="Martinez A.I."/>
            <person name="Ruiz-Herrera J."/>
            <person name="Valentin E."/>
            <person name="Lopez J.A."/>
            <person name="Sentandreu R."/>
        </authorList>
    </citation>
    <scope>IDENTIFICATION BY MASS SPECTROMETRY</scope>
    <scope>SUBCELLULAR LOCATION</scope>
</reference>
<reference key="12">
    <citation type="journal article" date="2010" name="Yeast">
        <title>Mass spectrometric analysis of the secretome of Candida albicans.</title>
        <authorList>
            <person name="Sorgo A.G."/>
            <person name="Heilmann C.J."/>
            <person name="Dekker H.L."/>
            <person name="Brul S."/>
            <person name="de Koster C.G."/>
            <person name="Klis F.M."/>
        </authorList>
    </citation>
    <scope>IDENTIFICATION BY MASS SPECTROMETRY</scope>
    <scope>SUBCELLULAR LOCATION</scope>
</reference>
<reference key="13">
    <citation type="journal article" date="2011" name="Microbiology">
        <title>Mass spectrometric quantification of the adaptations in the wall proteome of Candida albicans in response to ambient pH.</title>
        <authorList>
            <person name="Sosinska G.J."/>
            <person name="de Koning L.J."/>
            <person name="de Groot P.W."/>
            <person name="Manders E.M."/>
            <person name="Dekker H.L."/>
            <person name="Hellingwerf K.J."/>
            <person name="de Koster C.G."/>
            <person name="Klis F.M."/>
        </authorList>
    </citation>
    <scope>IDENTIFICATION BY MASS SPECTROMETRY</scope>
    <scope>SUBCELLULAR LOCATION</scope>
</reference>
<reference key="14">
    <citation type="journal article" date="2011" name="Eukaryot. Cell">
        <title>Effects of fluconazole on the secretome, the wall proteome, and wall integrity of the clinical fungus Candida albicans.</title>
        <authorList>
            <person name="Sorgo A.G."/>
            <person name="Heilmann C.J."/>
            <person name="Dekker H.L."/>
            <person name="Bekker M."/>
            <person name="Brul S."/>
            <person name="de Koster C.G."/>
            <person name="de Koning L.J."/>
            <person name="Klis F.M."/>
        </authorList>
    </citation>
    <scope>INDUCTION</scope>
</reference>
<reference key="15">
    <citation type="journal article" date="2012" name="Proteomics">
        <title>Carbon source-induced reprogramming of the cell wall proteome and secretome modulates the adherence and drug resistance of the fungal pathogen Candida albicans.</title>
        <authorList>
            <person name="Ene I.V."/>
            <person name="Heilmann C.J."/>
            <person name="Sorgo A.G."/>
            <person name="Walker L.A."/>
            <person name="de Koster C.G."/>
            <person name="Munro C.A."/>
            <person name="Klis F.M."/>
            <person name="Brown A.J."/>
        </authorList>
    </citation>
    <scope>FUNCTION</scope>
    <scope>INDUCTION</scope>
</reference>
<evidence type="ECO:0000250" key="1"/>
<evidence type="ECO:0000255" key="2"/>
<evidence type="ECO:0000256" key="3">
    <source>
        <dbReference type="SAM" id="MobiDB-lite"/>
    </source>
</evidence>
<evidence type="ECO:0000269" key="4">
    <source>
    </source>
</evidence>
<evidence type="ECO:0000269" key="5">
    <source>
    </source>
</evidence>
<evidence type="ECO:0000269" key="6">
    <source>
    </source>
</evidence>
<evidence type="ECO:0000269" key="7">
    <source>
    </source>
</evidence>
<evidence type="ECO:0000269" key="8">
    <source>
    </source>
</evidence>
<evidence type="ECO:0000269" key="9">
    <source>
    </source>
</evidence>
<evidence type="ECO:0000269" key="10">
    <source>
    </source>
</evidence>
<evidence type="ECO:0000269" key="11">
    <source>
    </source>
</evidence>
<evidence type="ECO:0000269" key="12">
    <source>
    </source>
</evidence>
<evidence type="ECO:0000269" key="13">
    <source>
    </source>
</evidence>
<evidence type="ECO:0000305" key="14"/>
<comment type="function">
    <text evidence="9 13">Splits internally a 1,3-beta-glucan molecule and transfers the newly generated reducing end (the donor) to the non-reducing end of another 1,3-beta-glucan molecule (the acceptor) forming a 1,3-beta linkage, resulting in the elongation of 1,3-beta-glucan chains in the cell wall. Involved in cell wall biosynthesis and morphogenesis. Plays a key role in virulence.</text>
</comment>
<comment type="subcellular location">
    <subcellularLocation>
        <location evidence="7 8 10 11">Secreted</location>
        <location evidence="7 8 10 11">Cell wall</location>
    </subcellularLocation>
    <subcellularLocation>
        <location evidence="14">Membrane</location>
        <topology evidence="14">Lipid-anchor</topology>
        <topology evidence="14">GPI-anchor</topology>
    </subcellularLocation>
    <text>Covalently-linked GPI-modified cell wall protein (GPI-CWP).</text>
</comment>
<comment type="induction">
    <text evidence="4 5 6 12 13">Transcript levels are elevated during host infection, and transiently increased after induction of hyphal formation with serum. Expression is controlled by CWT1 and induced by fluconazole.</text>
</comment>
<comment type="PTM">
    <text>The GPI-anchor is attached to the protein in the endoplasmic reticulum and serves to target the protein to the cell surface. There, the glucosamine-inositol phospholipid moiety is cleaved off and the GPI-modified mannoprotein is covalently attached via its lipidless GPI glycan remnant to the 1,6-beta-glucan of the outer cell wall layer.</text>
</comment>
<comment type="disruption phenotype">
    <text evidence="9">Leads to decreased caspofungin sensitivity.</text>
</comment>
<comment type="similarity">
    <text evidence="14">Belongs to the glycosyl hydrolase 72 family.</text>
</comment>
<name>PGA4_CANAL</name>
<accession>Q5AJY5</accession>
<accession>A0A1D8PP82</accession>
<feature type="signal peptide" evidence="2">
    <location>
        <begin position="1"/>
        <end position="18"/>
    </location>
</feature>
<feature type="chain" id="PRO_0000424640" description="1,3-beta-glucanosyltransferase PGA4">
    <location>
        <begin position="19"/>
        <end position="430"/>
    </location>
</feature>
<feature type="propeptide" id="PRO_0000424641" description="Removed in mature form" evidence="2">
    <location>
        <begin position="431"/>
        <end position="451"/>
    </location>
</feature>
<feature type="region of interest" description="Disordered" evidence="3">
    <location>
        <begin position="316"/>
        <end position="336"/>
    </location>
</feature>
<feature type="region of interest" description="Disordered" evidence="3">
    <location>
        <begin position="395"/>
        <end position="427"/>
    </location>
</feature>
<feature type="compositionally biased region" description="Low complexity" evidence="3">
    <location>
        <begin position="396"/>
        <end position="426"/>
    </location>
</feature>
<feature type="active site" description="Proton donor" evidence="1">
    <location>
        <position position="152"/>
    </location>
</feature>
<feature type="active site" description="Nucleophile" evidence="1">
    <location>
        <position position="254"/>
    </location>
</feature>
<feature type="binding site" evidence="1">
    <location>
        <position position="81"/>
    </location>
    <ligand>
        <name>(1,3-beta-D-glucosyl)n</name>
        <dbReference type="ChEBI" id="CHEBI:37671"/>
        <label>1</label>
        <note>donor substrate</note>
    </ligand>
</feature>
<feature type="binding site" evidence="1">
    <location>
        <begin position="108"/>
        <end position="116"/>
    </location>
    <ligand>
        <name>(1,3-beta-D-glucosyl)n</name>
        <dbReference type="ChEBI" id="CHEBI:37671"/>
        <label>1</label>
        <note>donor substrate</note>
    </ligand>
</feature>
<feature type="binding site" evidence="1">
    <location>
        <position position="151"/>
    </location>
    <ligand>
        <name>(1,3-beta-D-glucosyl)n</name>
        <dbReference type="ChEBI" id="CHEBI:37671"/>
        <label>1</label>
        <note>donor substrate</note>
    </ligand>
</feature>
<feature type="binding site" evidence="1">
    <location>
        <position position="152"/>
    </location>
    <ligand>
        <name>(1,3-beta-D-glucosyl)n</name>
        <dbReference type="ChEBI" id="CHEBI:37671"/>
        <label>2</label>
        <note>acceptor substrate</note>
    </ligand>
</feature>
<feature type="binding site" evidence="1">
    <location>
        <position position="198"/>
    </location>
    <ligand>
        <name>(1,3-beta-D-glucosyl)n</name>
        <dbReference type="ChEBI" id="CHEBI:37671"/>
        <label>2</label>
        <note>acceptor substrate</note>
    </ligand>
</feature>
<feature type="binding site" evidence="1">
    <location>
        <position position="286"/>
    </location>
    <ligand>
        <name>(1,3-beta-D-glucosyl)n</name>
        <dbReference type="ChEBI" id="CHEBI:37671"/>
        <label>1</label>
        <note>donor substrate</note>
    </ligand>
</feature>
<feature type="lipid moiety-binding region" description="GPI-anchor amidated aspartate" evidence="2">
    <location>
        <position position="430"/>
    </location>
</feature>
<feature type="glycosylation site" description="N-linked (GlcNAc...) asparagine" evidence="2">
    <location>
        <position position="88"/>
    </location>
</feature>
<feature type="glycosylation site" description="N-linked (GlcNAc...) asparagine" evidence="2">
    <location>
        <position position="245"/>
    </location>
</feature>
<feature type="glycosylation site" description="N-linked (GlcNAc...) asparagine" evidence="2">
    <location>
        <position position="347"/>
    </location>
</feature>
<feature type="glycosylation site" description="N-linked (GlcNAc...) asparagine" evidence="2">
    <location>
        <position position="394"/>
    </location>
</feature>
<feature type="glycosylation site" description="N-linked (GlcNAc...) asparagine" evidence="2">
    <location>
        <position position="422"/>
    </location>
</feature>
<organism>
    <name type="scientific">Candida albicans (strain SC5314 / ATCC MYA-2876)</name>
    <name type="common">Yeast</name>
    <dbReference type="NCBI Taxonomy" id="237561"/>
    <lineage>
        <taxon>Eukaryota</taxon>
        <taxon>Fungi</taxon>
        <taxon>Dikarya</taxon>
        <taxon>Ascomycota</taxon>
        <taxon>Saccharomycotina</taxon>
        <taxon>Pichiomycetes</taxon>
        <taxon>Debaryomycetaceae</taxon>
        <taxon>Candida/Lodderomyces clade</taxon>
        <taxon>Candida</taxon>
    </lineage>
</organism>
<proteinExistence type="evidence at protein level"/>
<dbReference type="EC" id="2.4.1.-"/>
<dbReference type="EMBL" id="CP017627">
    <property type="protein sequence ID" value="AOW29943.1"/>
    <property type="molecule type" value="Genomic_DNA"/>
</dbReference>
<dbReference type="RefSeq" id="XP_721943.1">
    <property type="nucleotide sequence ID" value="XM_716850.2"/>
</dbReference>
<dbReference type="SMR" id="Q5AJY5"/>
<dbReference type="FunCoup" id="Q5AJY5">
    <property type="interactions" value="31"/>
</dbReference>
<dbReference type="STRING" id="237561.Q5AJY5"/>
<dbReference type="GlyCosmos" id="Q5AJY5">
    <property type="glycosylation" value="5 sites, No reported glycans"/>
</dbReference>
<dbReference type="EnsemblFungi" id="C5_05390C_A-T">
    <property type="protein sequence ID" value="C5_05390C_A-T-p1"/>
    <property type="gene ID" value="C5_05390C_A"/>
</dbReference>
<dbReference type="GeneID" id="3636406"/>
<dbReference type="KEGG" id="cal:CAALFM_C505390CA"/>
<dbReference type="CGD" id="CAL0000186924">
    <property type="gene designation" value="PGA4"/>
</dbReference>
<dbReference type="VEuPathDB" id="FungiDB:C5_05390C_A"/>
<dbReference type="eggNOG" id="ENOG502QRZZ">
    <property type="taxonomic scope" value="Eukaryota"/>
</dbReference>
<dbReference type="HOGENOM" id="CLU_021855_1_0_1"/>
<dbReference type="InParanoid" id="Q5AJY5"/>
<dbReference type="OMA" id="GVNDYSW"/>
<dbReference type="OrthoDB" id="421038at2759"/>
<dbReference type="PRO" id="PR:Q5AJY5"/>
<dbReference type="Proteomes" id="UP000000559">
    <property type="component" value="Chromosome 5"/>
</dbReference>
<dbReference type="GO" id="GO:0009986">
    <property type="term" value="C:cell surface"/>
    <property type="evidence" value="ECO:0000314"/>
    <property type="project" value="CGD"/>
</dbReference>
<dbReference type="GO" id="GO:0005576">
    <property type="term" value="C:extracellular region"/>
    <property type="evidence" value="ECO:0000314"/>
    <property type="project" value="CGD"/>
</dbReference>
<dbReference type="GO" id="GO:1903561">
    <property type="term" value="C:extracellular vesicle"/>
    <property type="evidence" value="ECO:0000314"/>
    <property type="project" value="CGD"/>
</dbReference>
<dbReference type="GO" id="GO:0009277">
    <property type="term" value="C:fungal-type cell wall"/>
    <property type="evidence" value="ECO:0000314"/>
    <property type="project" value="CGD"/>
</dbReference>
<dbReference type="GO" id="GO:0030446">
    <property type="term" value="C:hyphal cell wall"/>
    <property type="evidence" value="ECO:0000314"/>
    <property type="project" value="CGD"/>
</dbReference>
<dbReference type="GO" id="GO:0005886">
    <property type="term" value="C:plasma membrane"/>
    <property type="evidence" value="ECO:0000314"/>
    <property type="project" value="CGD"/>
</dbReference>
<dbReference type="GO" id="GO:0098552">
    <property type="term" value="C:side of membrane"/>
    <property type="evidence" value="ECO:0007669"/>
    <property type="project" value="UniProtKB-KW"/>
</dbReference>
<dbReference type="GO" id="GO:0030445">
    <property type="term" value="C:yeast-form cell wall"/>
    <property type="evidence" value="ECO:0000314"/>
    <property type="project" value="CGD"/>
</dbReference>
<dbReference type="GO" id="GO:0042124">
    <property type="term" value="F:1,3-beta-glucanosyltransferase activity"/>
    <property type="evidence" value="ECO:0000247"/>
    <property type="project" value="CGD"/>
</dbReference>
<dbReference type="GO" id="GO:0071970">
    <property type="term" value="P:fungal-type cell wall (1-&gt;3)-beta-D-glucan biosynthetic process"/>
    <property type="evidence" value="ECO:0000318"/>
    <property type="project" value="GO_Central"/>
</dbReference>
<dbReference type="GO" id="GO:0031505">
    <property type="term" value="P:fungal-type cell wall organization"/>
    <property type="evidence" value="ECO:0000315"/>
    <property type="project" value="CGD"/>
</dbReference>
<dbReference type="FunFam" id="3.20.20.80:FF:000032">
    <property type="entry name" value="1,3-beta-glucanosyltransferase"/>
    <property type="match status" value="1"/>
</dbReference>
<dbReference type="Gene3D" id="3.20.20.80">
    <property type="entry name" value="Glycosidases"/>
    <property type="match status" value="1"/>
</dbReference>
<dbReference type="InterPro" id="IPR004886">
    <property type="entry name" value="Glucanosyltransferase"/>
</dbReference>
<dbReference type="InterPro" id="IPR017853">
    <property type="entry name" value="Glycoside_hydrolase_SF"/>
</dbReference>
<dbReference type="PANTHER" id="PTHR31468">
    <property type="entry name" value="1,3-BETA-GLUCANOSYLTRANSFERASE GAS1"/>
    <property type="match status" value="1"/>
</dbReference>
<dbReference type="PANTHER" id="PTHR31468:SF5">
    <property type="entry name" value="1,3-BETA-GLUCANOSYLTRANSFERASE GAS5"/>
    <property type="match status" value="1"/>
</dbReference>
<dbReference type="Pfam" id="PF03198">
    <property type="entry name" value="Glyco_hydro_72"/>
    <property type="match status" value="1"/>
</dbReference>
<dbReference type="SUPFAM" id="SSF51445">
    <property type="entry name" value="(Trans)glycosidases"/>
    <property type="match status" value="1"/>
</dbReference>
<keyword id="KW-0134">Cell wall</keyword>
<keyword id="KW-0961">Cell wall biogenesis/degradation</keyword>
<keyword id="KW-0325">Glycoprotein</keyword>
<keyword id="KW-0336">GPI-anchor</keyword>
<keyword id="KW-0449">Lipoprotein</keyword>
<keyword id="KW-0472">Membrane</keyword>
<keyword id="KW-1185">Reference proteome</keyword>
<keyword id="KW-0964">Secreted</keyword>
<keyword id="KW-0732">Signal</keyword>
<keyword id="KW-0808">Transferase</keyword>
<keyword id="KW-0843">Virulence</keyword>
<gene>
    <name type="primary">PGA4</name>
    <name type="synonym">GAS1</name>
    <name type="ordered locus">CAALFM_C505390CA</name>
    <name type="ORF">CaO19.11518</name>
    <name type="ORF">CaO19.4035</name>
</gene>
<sequence>MLFRSLVTYLSLVSSVLSIASIKVEGNAFWDSESGDRFYIRGVDYQPGGSSELEDPLADTNVCERDVKYFQELGINTIRVYSIDNTKNHTECMDTLAKAGIYVILDVNTPHSSITRSDAACSYNTDYLQEVFASIVEFAQFDNTLGFFAGNEVINDGPSLEAAPYVKAVVRDMKTFIKNRGFRTIPVGYSAASVDEYRLPSGLYFNCGDDDMARIDMYGINDYSWCGDASMTTSQYSQQMKDFANYTVPLFFSEFGCNAKRPRPFSEIEAIYSTEMSSVFSGGLVYEYSEEASNYGLVELKGDSVTTNDDFDNLKSQFEKTKNPSGDGGYLKSTGGNKCPPKSNIWNVTEEIPDTPKGALKYLKGLAEPTGHGFDAYVQGNCNAKGNNVDDTGNYTSSITASSRASPSQTSQVSSSSATSANSTSSKKNDAAVEGAGFLSVIALAAGIALL</sequence>
<protein>
    <recommendedName>
        <fullName>1,3-beta-glucanosyltransferase PGA4</fullName>
        <ecNumber>2.4.1.-</ecNumber>
    </recommendedName>
    <alternativeName>
        <fullName>GPI-anchored protein 4</fullName>
    </alternativeName>
</protein>